<organism>
    <name type="scientific">Agrobacterium fabrum (strain C58 / ATCC 33970)</name>
    <name type="common">Agrobacterium tumefaciens (strain C58)</name>
    <dbReference type="NCBI Taxonomy" id="176299"/>
    <lineage>
        <taxon>Bacteria</taxon>
        <taxon>Pseudomonadati</taxon>
        <taxon>Pseudomonadota</taxon>
        <taxon>Alphaproteobacteria</taxon>
        <taxon>Hyphomicrobiales</taxon>
        <taxon>Rhizobiaceae</taxon>
        <taxon>Rhizobium/Agrobacterium group</taxon>
        <taxon>Agrobacterium</taxon>
        <taxon>Agrobacterium tumefaciens complex</taxon>
    </lineage>
</organism>
<name>BETB_AGRFC</name>
<feature type="chain" id="PRO_0000056535" description="Betaine aldehyde dehydrogenase">
    <location>
        <begin position="1"/>
        <end position="493"/>
    </location>
</feature>
<feature type="active site" description="Charge relay system" evidence="1">
    <location>
        <position position="168"/>
    </location>
</feature>
<feature type="active site" description="Proton acceptor" evidence="1">
    <location>
        <position position="256"/>
    </location>
</feature>
<feature type="active site" description="Nucleophile" evidence="1">
    <location>
        <position position="290"/>
    </location>
</feature>
<feature type="active site" description="Charge relay system" evidence="1">
    <location>
        <position position="467"/>
    </location>
</feature>
<feature type="binding site" evidence="1">
    <location>
        <position position="32"/>
    </location>
    <ligand>
        <name>K(+)</name>
        <dbReference type="ChEBI" id="CHEBI:29103"/>
        <label>1</label>
    </ligand>
</feature>
<feature type="binding site" evidence="1">
    <location>
        <position position="33"/>
    </location>
    <ligand>
        <name>K(+)</name>
        <dbReference type="ChEBI" id="CHEBI:29103"/>
        <label>1</label>
    </ligand>
</feature>
<feature type="binding site" evidence="1">
    <location>
        <position position="99"/>
    </location>
    <ligand>
        <name>K(+)</name>
        <dbReference type="ChEBI" id="CHEBI:29103"/>
        <label>1</label>
    </ligand>
</feature>
<feature type="binding site" evidence="1">
    <location>
        <begin position="156"/>
        <end position="158"/>
    </location>
    <ligand>
        <name>NAD(+)</name>
        <dbReference type="ChEBI" id="CHEBI:57540"/>
    </ligand>
</feature>
<feature type="binding site" evidence="1">
    <location>
        <begin position="182"/>
        <end position="185"/>
    </location>
    <ligand>
        <name>NAD(+)</name>
        <dbReference type="ChEBI" id="CHEBI:57540"/>
    </ligand>
</feature>
<feature type="binding site" evidence="1">
    <location>
        <begin position="235"/>
        <end position="238"/>
    </location>
    <ligand>
        <name>NAD(+)</name>
        <dbReference type="ChEBI" id="CHEBI:57540"/>
    </ligand>
</feature>
<feature type="binding site" evidence="1">
    <location>
        <position position="250"/>
    </location>
    <ligand>
        <name>K(+)</name>
        <dbReference type="ChEBI" id="CHEBI:29103"/>
        <label>2</label>
    </ligand>
</feature>
<feature type="binding site" evidence="1">
    <location>
        <position position="258"/>
    </location>
    <ligand>
        <name>NAD(+)</name>
        <dbReference type="ChEBI" id="CHEBI:57540"/>
    </ligand>
</feature>
<feature type="binding site" description="covalent" evidence="1">
    <location>
        <position position="290"/>
    </location>
    <ligand>
        <name>NAD(+)</name>
        <dbReference type="ChEBI" id="CHEBI:57540"/>
    </ligand>
</feature>
<feature type="binding site" evidence="1">
    <location>
        <position position="390"/>
    </location>
    <ligand>
        <name>NAD(+)</name>
        <dbReference type="ChEBI" id="CHEBI:57540"/>
    </ligand>
</feature>
<feature type="binding site" evidence="1">
    <location>
        <position position="460"/>
    </location>
    <ligand>
        <name>K(+)</name>
        <dbReference type="ChEBI" id="CHEBI:29103"/>
        <label>2</label>
    </ligand>
</feature>
<feature type="binding site" evidence="1">
    <location>
        <position position="463"/>
    </location>
    <ligand>
        <name>K(+)</name>
        <dbReference type="ChEBI" id="CHEBI:29103"/>
        <label>2</label>
    </ligand>
</feature>
<feature type="modified residue" description="Cysteine sulfenic acid (-SOH)" evidence="1">
    <location>
        <position position="290"/>
    </location>
</feature>
<feature type="strand" evidence="3">
    <location>
        <begin position="12"/>
        <end position="17"/>
    </location>
</feature>
<feature type="strand" evidence="3">
    <location>
        <begin position="20"/>
        <end position="22"/>
    </location>
</feature>
<feature type="strand" evidence="3">
    <location>
        <begin position="29"/>
        <end position="33"/>
    </location>
</feature>
<feature type="turn" evidence="3">
    <location>
        <begin position="35"/>
        <end position="37"/>
    </location>
</feature>
<feature type="strand" evidence="3">
    <location>
        <begin position="40"/>
        <end position="45"/>
    </location>
</feature>
<feature type="helix" evidence="3">
    <location>
        <begin position="49"/>
        <end position="68"/>
    </location>
</feature>
<feature type="helix" evidence="3">
    <location>
        <begin position="71"/>
        <end position="87"/>
    </location>
</feature>
<feature type="helix" evidence="3">
    <location>
        <begin position="89"/>
        <end position="100"/>
    </location>
</feature>
<feature type="helix" evidence="3">
    <location>
        <begin position="104"/>
        <end position="110"/>
    </location>
</feature>
<feature type="helix" evidence="3">
    <location>
        <begin position="112"/>
        <end position="129"/>
    </location>
</feature>
<feature type="strand" evidence="3">
    <location>
        <begin position="134"/>
        <end position="136"/>
    </location>
</feature>
<feature type="strand" evidence="3">
    <location>
        <begin position="138"/>
        <end position="148"/>
    </location>
</feature>
<feature type="strand" evidence="3">
    <location>
        <begin position="150"/>
        <end position="155"/>
    </location>
</feature>
<feature type="strand" evidence="3">
    <location>
        <begin position="158"/>
        <end position="160"/>
    </location>
</feature>
<feature type="helix" evidence="3">
    <location>
        <begin position="161"/>
        <end position="174"/>
    </location>
</feature>
<feature type="strand" evidence="3">
    <location>
        <begin position="178"/>
        <end position="182"/>
    </location>
</feature>
<feature type="helix" evidence="3">
    <location>
        <begin position="190"/>
        <end position="200"/>
    </location>
</feature>
<feature type="strand" evidence="3">
    <location>
        <begin position="207"/>
        <end position="210"/>
    </location>
</feature>
<feature type="helix" evidence="3">
    <location>
        <begin position="217"/>
        <end position="222"/>
    </location>
</feature>
<feature type="strand" evidence="3">
    <location>
        <begin position="227"/>
        <end position="234"/>
    </location>
</feature>
<feature type="helix" evidence="3">
    <location>
        <begin position="236"/>
        <end position="248"/>
    </location>
</feature>
<feature type="strand" evidence="3">
    <location>
        <begin position="252"/>
        <end position="256"/>
    </location>
</feature>
<feature type="strand" evidence="3">
    <location>
        <begin position="261"/>
        <end position="265"/>
    </location>
</feature>
<feature type="helix" evidence="3">
    <location>
        <begin position="271"/>
        <end position="282"/>
    </location>
</feature>
<feature type="helix" evidence="3">
    <location>
        <begin position="287"/>
        <end position="290"/>
    </location>
</feature>
<feature type="strand" evidence="3">
    <location>
        <begin position="294"/>
        <end position="299"/>
    </location>
</feature>
<feature type="helix" evidence="3">
    <location>
        <begin position="300"/>
        <end position="302"/>
    </location>
</feature>
<feature type="helix" evidence="3">
    <location>
        <begin position="303"/>
        <end position="316"/>
    </location>
</feature>
<feature type="helix" evidence="3">
    <location>
        <begin position="335"/>
        <end position="351"/>
    </location>
</feature>
<feature type="strand" evidence="3">
    <location>
        <begin position="354"/>
        <end position="357"/>
    </location>
</feature>
<feature type="strand" evidence="3">
    <location>
        <begin position="367"/>
        <end position="370"/>
    </location>
</feature>
<feature type="strand" evidence="3">
    <location>
        <begin position="375"/>
        <end position="380"/>
    </location>
</feature>
<feature type="helix" evidence="3">
    <location>
        <begin position="385"/>
        <end position="388"/>
    </location>
</feature>
<feature type="strand" evidence="3">
    <location>
        <begin position="392"/>
        <end position="401"/>
    </location>
</feature>
<feature type="helix" evidence="3">
    <location>
        <begin position="404"/>
        <end position="412"/>
    </location>
</feature>
<feature type="strand" evidence="3">
    <location>
        <begin position="414"/>
        <end position="423"/>
    </location>
</feature>
<feature type="helix" evidence="3">
    <location>
        <begin position="427"/>
        <end position="436"/>
    </location>
</feature>
<feature type="strand" evidence="3">
    <location>
        <begin position="440"/>
        <end position="446"/>
    </location>
</feature>
<feature type="helix" evidence="3">
    <location>
        <begin position="470"/>
        <end position="475"/>
    </location>
</feature>
<feature type="strand" evidence="3">
    <location>
        <begin position="476"/>
        <end position="484"/>
    </location>
</feature>
<proteinExistence type="evidence at protein level"/>
<gene>
    <name evidence="1" type="primary">betB</name>
    <name type="ordered locus">Atu0829</name>
    <name type="ORF">AGR_C_1515</name>
</gene>
<comment type="function">
    <text evidence="1">Involved in the biosynthesis of the osmoprotectant glycine betaine. Catalyzes the irreversible oxidation of betaine aldehyde to the corresponding acid.</text>
</comment>
<comment type="catalytic activity">
    <reaction evidence="1">
        <text>betaine aldehyde + NAD(+) + H2O = glycine betaine + NADH + 2 H(+)</text>
        <dbReference type="Rhea" id="RHEA:15305"/>
        <dbReference type="ChEBI" id="CHEBI:15377"/>
        <dbReference type="ChEBI" id="CHEBI:15378"/>
        <dbReference type="ChEBI" id="CHEBI:15710"/>
        <dbReference type="ChEBI" id="CHEBI:17750"/>
        <dbReference type="ChEBI" id="CHEBI:57540"/>
        <dbReference type="ChEBI" id="CHEBI:57945"/>
        <dbReference type="EC" id="1.2.1.8"/>
    </reaction>
    <physiologicalReaction direction="left-to-right" evidence="1">
        <dbReference type="Rhea" id="RHEA:15306"/>
    </physiologicalReaction>
</comment>
<comment type="cofactor">
    <cofactor evidence="1">
        <name>K(+)</name>
        <dbReference type="ChEBI" id="CHEBI:29103"/>
    </cofactor>
    <text evidence="1">Binds 2 potassium ions per subunit.</text>
</comment>
<comment type="pathway">
    <text evidence="1">Amine and polyamine biosynthesis; betaine biosynthesis via choline pathway; betaine from betaine aldehyde: step 1/1.</text>
</comment>
<comment type="subunit">
    <text evidence="2">Dimer of dimers.</text>
</comment>
<comment type="similarity">
    <text evidence="1">Belongs to the aldehyde dehydrogenase family.</text>
</comment>
<dbReference type="EC" id="1.2.1.8" evidence="1"/>
<dbReference type="EMBL" id="AE007869">
    <property type="protein sequence ID" value="AAK86635.1"/>
    <property type="molecule type" value="Genomic_DNA"/>
</dbReference>
<dbReference type="PIR" id="AE2678">
    <property type="entry name" value="AE2678"/>
</dbReference>
<dbReference type="PIR" id="B97460">
    <property type="entry name" value="B97460"/>
</dbReference>
<dbReference type="RefSeq" id="NP_353850.1">
    <property type="nucleotide sequence ID" value="NC_003062.2"/>
</dbReference>
<dbReference type="RefSeq" id="WP_010971179.1">
    <property type="nucleotide sequence ID" value="NC_003062.2"/>
</dbReference>
<dbReference type="PDB" id="3R31">
    <property type="method" value="X-ray"/>
    <property type="resolution" value="2.15 A"/>
    <property type="chains" value="A/B=1-493"/>
</dbReference>
<dbReference type="PDBsum" id="3R31"/>
<dbReference type="SMR" id="Q8UH56"/>
<dbReference type="STRING" id="176299.Atu0829"/>
<dbReference type="EnsemblBacteria" id="AAK86635">
    <property type="protein sequence ID" value="AAK86635"/>
    <property type="gene ID" value="Atu0829"/>
</dbReference>
<dbReference type="GeneID" id="1132867"/>
<dbReference type="KEGG" id="atu:Atu0829"/>
<dbReference type="PATRIC" id="fig|176299.10.peg.825"/>
<dbReference type="eggNOG" id="COG1012">
    <property type="taxonomic scope" value="Bacteria"/>
</dbReference>
<dbReference type="HOGENOM" id="CLU_005391_0_2_5"/>
<dbReference type="OrthoDB" id="9772584at2"/>
<dbReference type="PhylomeDB" id="Q8UH56"/>
<dbReference type="BioCyc" id="AGRO:ATU0829-MONOMER"/>
<dbReference type="UniPathway" id="UPA00529">
    <property type="reaction ID" value="UER00386"/>
</dbReference>
<dbReference type="EvolutionaryTrace" id="Q8UH56"/>
<dbReference type="Proteomes" id="UP000000813">
    <property type="component" value="Chromosome circular"/>
</dbReference>
<dbReference type="GO" id="GO:0008802">
    <property type="term" value="F:betaine-aldehyde dehydrogenase (NAD+) activity"/>
    <property type="evidence" value="ECO:0007669"/>
    <property type="project" value="UniProtKB-UniRule"/>
</dbReference>
<dbReference type="GO" id="GO:0046872">
    <property type="term" value="F:metal ion binding"/>
    <property type="evidence" value="ECO:0007669"/>
    <property type="project" value="UniProtKB-KW"/>
</dbReference>
<dbReference type="GO" id="GO:0019285">
    <property type="term" value="P:glycine betaine biosynthetic process from choline"/>
    <property type="evidence" value="ECO:0007669"/>
    <property type="project" value="UniProtKB-UniRule"/>
</dbReference>
<dbReference type="CDD" id="cd07090">
    <property type="entry name" value="ALDH_F9_TMBADH"/>
    <property type="match status" value="1"/>
</dbReference>
<dbReference type="FunFam" id="3.40.309.10:FF:000012">
    <property type="entry name" value="Betaine aldehyde dehydrogenase"/>
    <property type="match status" value="1"/>
</dbReference>
<dbReference type="FunFam" id="3.40.605.10:FF:000007">
    <property type="entry name" value="NAD/NADP-dependent betaine aldehyde dehydrogenase"/>
    <property type="match status" value="1"/>
</dbReference>
<dbReference type="Gene3D" id="3.40.605.10">
    <property type="entry name" value="Aldehyde Dehydrogenase, Chain A, domain 1"/>
    <property type="match status" value="1"/>
</dbReference>
<dbReference type="Gene3D" id="3.40.309.10">
    <property type="entry name" value="Aldehyde Dehydrogenase, Chain A, domain 2"/>
    <property type="match status" value="1"/>
</dbReference>
<dbReference type="HAMAP" id="MF_00804">
    <property type="entry name" value="BADH"/>
    <property type="match status" value="1"/>
</dbReference>
<dbReference type="InterPro" id="IPR016161">
    <property type="entry name" value="Ald_DH/histidinol_DH"/>
</dbReference>
<dbReference type="InterPro" id="IPR016163">
    <property type="entry name" value="Ald_DH_C"/>
</dbReference>
<dbReference type="InterPro" id="IPR016160">
    <property type="entry name" value="Ald_DH_CS_CYS"/>
</dbReference>
<dbReference type="InterPro" id="IPR029510">
    <property type="entry name" value="Ald_DH_CS_GLU"/>
</dbReference>
<dbReference type="InterPro" id="IPR016162">
    <property type="entry name" value="Ald_DH_N"/>
</dbReference>
<dbReference type="InterPro" id="IPR015590">
    <property type="entry name" value="Aldehyde_DH_dom"/>
</dbReference>
<dbReference type="InterPro" id="IPR011264">
    <property type="entry name" value="BADH"/>
</dbReference>
<dbReference type="NCBIfam" id="TIGR01804">
    <property type="entry name" value="BADH"/>
    <property type="match status" value="1"/>
</dbReference>
<dbReference type="NCBIfam" id="NF009725">
    <property type="entry name" value="PRK13252.1"/>
    <property type="match status" value="1"/>
</dbReference>
<dbReference type="PANTHER" id="PTHR11699">
    <property type="entry name" value="ALDEHYDE DEHYDROGENASE-RELATED"/>
    <property type="match status" value="1"/>
</dbReference>
<dbReference type="Pfam" id="PF00171">
    <property type="entry name" value="Aldedh"/>
    <property type="match status" value="1"/>
</dbReference>
<dbReference type="SUPFAM" id="SSF53720">
    <property type="entry name" value="ALDH-like"/>
    <property type="match status" value="1"/>
</dbReference>
<dbReference type="PROSITE" id="PS00070">
    <property type="entry name" value="ALDEHYDE_DEHYDR_CYS"/>
    <property type="match status" value="1"/>
</dbReference>
<dbReference type="PROSITE" id="PS00687">
    <property type="entry name" value="ALDEHYDE_DEHYDR_GLU"/>
    <property type="match status" value="1"/>
</dbReference>
<evidence type="ECO:0000255" key="1">
    <source>
        <dbReference type="HAMAP-Rule" id="MF_00804"/>
    </source>
</evidence>
<evidence type="ECO:0000305" key="2">
    <source ref="3"/>
</evidence>
<evidence type="ECO:0007829" key="3">
    <source>
        <dbReference type="PDB" id="3R31"/>
    </source>
</evidence>
<protein>
    <recommendedName>
        <fullName evidence="1">Betaine aldehyde dehydrogenase</fullName>
        <shortName evidence="1">BADH</shortName>
        <ecNumber evidence="1">1.2.1.8</ecNumber>
    </recommendedName>
</protein>
<keyword id="KW-0002">3D-structure</keyword>
<keyword id="KW-0479">Metal-binding</keyword>
<keyword id="KW-0520">NAD</keyword>
<keyword id="KW-0521">NADP</keyword>
<keyword id="KW-0558">Oxidation</keyword>
<keyword id="KW-0560">Oxidoreductase</keyword>
<keyword id="KW-0630">Potassium</keyword>
<keyword id="KW-1185">Reference proteome</keyword>
<accession>Q8UH56</accession>
<accession>Q7D0K9</accession>
<sequence>MTIATPLKAQPKASHFIDGDYVEDNTGTPFESIFPATGEMIAKLHAATPAIVERAIASAKRAQKEWAAMSPMARGRILKRAADIMRERNDALSTLETLDTGKPIQETIVADPTSGADAFEFFGGIAPSALNGDYIPLGGDFAYTKRVPLGVCVGIGAWNYPQQIACWKAAPALVAGNAMVFKPSENTPLGALKIAEILIEAGLPKGLFNVIQGDRDTGPLLVNHPDVAKVSLTGSVPTGRKVAAAAAGHLKHVTMELGGKSPMIVFDDADIESAVGGAMLGNFYSSGQVCSNGTRVFVQKKAKARFLENLKRRTEAMILGDPLDYATHLGPLVSKAQQEKVLSYIEKGKAEGATLITGGGIPNNVAGEGAYVQPTVFADVTDDMTIAREEIFGPVMCVLDFDDEDEVLARANATEFGLAGGVFTADLARAHRVVDGLEAGTLWINTYNLCPVEIPFGGSKQSGFGRENSAAALEHYSELKTVYVSTGKVDAPY</sequence>
<reference key="1">
    <citation type="journal article" date="2001" name="Science">
        <title>The genome of the natural genetic engineer Agrobacterium tumefaciens C58.</title>
        <authorList>
            <person name="Wood D.W."/>
            <person name="Setubal J.C."/>
            <person name="Kaul R."/>
            <person name="Monks D.E."/>
            <person name="Kitajima J.P."/>
            <person name="Okura V.K."/>
            <person name="Zhou Y."/>
            <person name="Chen L."/>
            <person name="Wood G.E."/>
            <person name="Almeida N.F. Jr."/>
            <person name="Woo L."/>
            <person name="Chen Y."/>
            <person name="Paulsen I.T."/>
            <person name="Eisen J.A."/>
            <person name="Karp P.D."/>
            <person name="Bovee D. Sr."/>
            <person name="Chapman P."/>
            <person name="Clendenning J."/>
            <person name="Deatherage G."/>
            <person name="Gillet W."/>
            <person name="Grant C."/>
            <person name="Kutyavin T."/>
            <person name="Levy R."/>
            <person name="Li M.-J."/>
            <person name="McClelland E."/>
            <person name="Palmieri A."/>
            <person name="Raymond C."/>
            <person name="Rouse G."/>
            <person name="Saenphimmachak C."/>
            <person name="Wu Z."/>
            <person name="Romero P."/>
            <person name="Gordon D."/>
            <person name="Zhang S."/>
            <person name="Yoo H."/>
            <person name="Tao Y."/>
            <person name="Biddle P."/>
            <person name="Jung M."/>
            <person name="Krespan W."/>
            <person name="Perry M."/>
            <person name="Gordon-Kamm B."/>
            <person name="Liao L."/>
            <person name="Kim S."/>
            <person name="Hendrick C."/>
            <person name="Zhao Z.-Y."/>
            <person name="Dolan M."/>
            <person name="Chumley F."/>
            <person name="Tingey S.V."/>
            <person name="Tomb J.-F."/>
            <person name="Gordon M.P."/>
            <person name="Olson M.V."/>
            <person name="Nester E.W."/>
        </authorList>
    </citation>
    <scope>NUCLEOTIDE SEQUENCE [LARGE SCALE GENOMIC DNA]</scope>
    <source>
        <strain>C58 / ATCC 33970</strain>
    </source>
</reference>
<reference key="2">
    <citation type="journal article" date="2001" name="Science">
        <title>Genome sequence of the plant pathogen and biotechnology agent Agrobacterium tumefaciens C58.</title>
        <authorList>
            <person name="Goodner B."/>
            <person name="Hinkle G."/>
            <person name="Gattung S."/>
            <person name="Miller N."/>
            <person name="Blanchard M."/>
            <person name="Qurollo B."/>
            <person name="Goldman B.S."/>
            <person name="Cao Y."/>
            <person name="Askenazi M."/>
            <person name="Halling C."/>
            <person name="Mullin L."/>
            <person name="Houmiel K."/>
            <person name="Gordon J."/>
            <person name="Vaudin M."/>
            <person name="Iartchouk O."/>
            <person name="Epp A."/>
            <person name="Liu F."/>
            <person name="Wollam C."/>
            <person name="Allinger M."/>
            <person name="Doughty D."/>
            <person name="Scott C."/>
            <person name="Lappas C."/>
            <person name="Markelz B."/>
            <person name="Flanagan C."/>
            <person name="Crowell C."/>
            <person name="Gurson J."/>
            <person name="Lomo C."/>
            <person name="Sear C."/>
            <person name="Strub G."/>
            <person name="Cielo C."/>
            <person name="Slater S."/>
        </authorList>
    </citation>
    <scope>NUCLEOTIDE SEQUENCE [LARGE SCALE GENOMIC DNA]</scope>
    <source>
        <strain>C58 / ATCC 33970</strain>
    </source>
</reference>
<reference key="3">
    <citation type="submission" date="2011-03" db="PDB data bank">
        <title>Crystal structure of betaine aldehyde dehydrogenase from Agrobacterium tumefaciens.</title>
        <authorList>
            <consortium name="New York structural genomics research consortium (NYSGRC)"/>
        </authorList>
    </citation>
    <scope>X-RAY CRYSTALLOGRAPHY (2.15 ANGSTROMS)</scope>
    <scope>SUBUNIT</scope>
</reference>